<sequence>MRNWRWLLLVLAVLLAWLQYRFWFGPGNSGEVMMLEAQVAHQTQDNEGLRQRNQALAAEVKDLKDGEAAIEERARSELGMIKPGETFYRVVEDAPLPAPASAEASAPAQQAPEPVDPVDHP</sequence>
<reference key="1">
    <citation type="journal article" date="2002" name="Nature">
        <title>Comparison of the genomes of two Xanthomonas pathogens with differing host specificities.</title>
        <authorList>
            <person name="da Silva A.C.R."/>
            <person name="Ferro J.A."/>
            <person name="Reinach F.C."/>
            <person name="Farah C.S."/>
            <person name="Furlan L.R."/>
            <person name="Quaggio R.B."/>
            <person name="Monteiro-Vitorello C.B."/>
            <person name="Van Sluys M.A."/>
            <person name="Almeida N.F. Jr."/>
            <person name="Alves L.M.C."/>
            <person name="do Amaral A.M."/>
            <person name="Bertolini M.C."/>
            <person name="Camargo L.E.A."/>
            <person name="Camarotte G."/>
            <person name="Cannavan F."/>
            <person name="Cardozo J."/>
            <person name="Chambergo F."/>
            <person name="Ciapina L.P."/>
            <person name="Cicarelli R.M.B."/>
            <person name="Coutinho L.L."/>
            <person name="Cursino-Santos J.R."/>
            <person name="El-Dorry H."/>
            <person name="Faria J.B."/>
            <person name="Ferreira A.J.S."/>
            <person name="Ferreira R.C.C."/>
            <person name="Ferro M.I.T."/>
            <person name="Formighieri E.F."/>
            <person name="Franco M.C."/>
            <person name="Greggio C.C."/>
            <person name="Gruber A."/>
            <person name="Katsuyama A.M."/>
            <person name="Kishi L.T."/>
            <person name="Leite R.P."/>
            <person name="Lemos E.G.M."/>
            <person name="Lemos M.V.F."/>
            <person name="Locali E.C."/>
            <person name="Machado M.A."/>
            <person name="Madeira A.M.B.N."/>
            <person name="Martinez-Rossi N.M."/>
            <person name="Martins E.C."/>
            <person name="Meidanis J."/>
            <person name="Menck C.F.M."/>
            <person name="Miyaki C.Y."/>
            <person name="Moon D.H."/>
            <person name="Moreira L.M."/>
            <person name="Novo M.T.M."/>
            <person name="Okura V.K."/>
            <person name="Oliveira M.C."/>
            <person name="Oliveira V.R."/>
            <person name="Pereira H.A."/>
            <person name="Rossi A."/>
            <person name="Sena J.A.D."/>
            <person name="Silva C."/>
            <person name="de Souza R.F."/>
            <person name="Spinola L.A.F."/>
            <person name="Takita M.A."/>
            <person name="Tamura R.E."/>
            <person name="Teixeira E.C."/>
            <person name="Tezza R.I.D."/>
            <person name="Trindade dos Santos M."/>
            <person name="Truffi D."/>
            <person name="Tsai S.M."/>
            <person name="White F.F."/>
            <person name="Setubal J.C."/>
            <person name="Kitajima J.P."/>
        </authorList>
    </citation>
    <scope>NUCLEOTIDE SEQUENCE [LARGE SCALE GENOMIC DNA]</scope>
    <source>
        <strain>306</strain>
    </source>
</reference>
<accession>Q8PLR9</accession>
<dbReference type="EMBL" id="AE008923">
    <property type="protein sequence ID" value="AAM36587.1"/>
    <property type="molecule type" value="Genomic_DNA"/>
</dbReference>
<dbReference type="RefSeq" id="WP_011051106.1">
    <property type="nucleotide sequence ID" value="NC_003919.1"/>
</dbReference>
<dbReference type="SMR" id="Q8PLR9"/>
<dbReference type="GeneID" id="66910870"/>
<dbReference type="KEGG" id="xac:XAC1720"/>
<dbReference type="eggNOG" id="COG2919">
    <property type="taxonomic scope" value="Bacteria"/>
</dbReference>
<dbReference type="HOGENOM" id="CLU_134863_5_0_6"/>
<dbReference type="Proteomes" id="UP000000576">
    <property type="component" value="Chromosome"/>
</dbReference>
<dbReference type="GO" id="GO:0032153">
    <property type="term" value="C:cell division site"/>
    <property type="evidence" value="ECO:0007669"/>
    <property type="project" value="UniProtKB-UniRule"/>
</dbReference>
<dbReference type="GO" id="GO:0030428">
    <property type="term" value="C:cell septum"/>
    <property type="evidence" value="ECO:0007669"/>
    <property type="project" value="TreeGrafter"/>
</dbReference>
<dbReference type="GO" id="GO:0005886">
    <property type="term" value="C:plasma membrane"/>
    <property type="evidence" value="ECO:0007669"/>
    <property type="project" value="UniProtKB-SubCell"/>
</dbReference>
<dbReference type="GO" id="GO:0043093">
    <property type="term" value="P:FtsZ-dependent cytokinesis"/>
    <property type="evidence" value="ECO:0007669"/>
    <property type="project" value="UniProtKB-UniRule"/>
</dbReference>
<dbReference type="HAMAP" id="MF_00599">
    <property type="entry name" value="FtsB"/>
    <property type="match status" value="1"/>
</dbReference>
<dbReference type="InterPro" id="IPR023081">
    <property type="entry name" value="Cell_div_FtsB"/>
</dbReference>
<dbReference type="InterPro" id="IPR007060">
    <property type="entry name" value="FtsL/DivIC"/>
</dbReference>
<dbReference type="NCBIfam" id="NF002058">
    <property type="entry name" value="PRK00888.1"/>
    <property type="match status" value="1"/>
</dbReference>
<dbReference type="PANTHER" id="PTHR37485">
    <property type="entry name" value="CELL DIVISION PROTEIN FTSB"/>
    <property type="match status" value="1"/>
</dbReference>
<dbReference type="PANTHER" id="PTHR37485:SF1">
    <property type="entry name" value="CELL DIVISION PROTEIN FTSB"/>
    <property type="match status" value="1"/>
</dbReference>
<dbReference type="Pfam" id="PF04977">
    <property type="entry name" value="DivIC"/>
    <property type="match status" value="1"/>
</dbReference>
<evidence type="ECO:0000255" key="1">
    <source>
        <dbReference type="HAMAP-Rule" id="MF_00599"/>
    </source>
</evidence>
<evidence type="ECO:0000256" key="2">
    <source>
        <dbReference type="SAM" id="MobiDB-lite"/>
    </source>
</evidence>
<organism>
    <name type="scientific">Xanthomonas axonopodis pv. citri (strain 306)</name>
    <dbReference type="NCBI Taxonomy" id="190486"/>
    <lineage>
        <taxon>Bacteria</taxon>
        <taxon>Pseudomonadati</taxon>
        <taxon>Pseudomonadota</taxon>
        <taxon>Gammaproteobacteria</taxon>
        <taxon>Lysobacterales</taxon>
        <taxon>Lysobacteraceae</taxon>
        <taxon>Xanthomonas</taxon>
    </lineage>
</organism>
<name>FTSB_XANAC</name>
<proteinExistence type="inferred from homology"/>
<keyword id="KW-0131">Cell cycle</keyword>
<keyword id="KW-0132">Cell division</keyword>
<keyword id="KW-0997">Cell inner membrane</keyword>
<keyword id="KW-1003">Cell membrane</keyword>
<keyword id="KW-0175">Coiled coil</keyword>
<keyword id="KW-0472">Membrane</keyword>
<keyword id="KW-0812">Transmembrane</keyword>
<keyword id="KW-1133">Transmembrane helix</keyword>
<gene>
    <name evidence="1" type="primary">ftsB</name>
    <name type="ordered locus">XAC1720</name>
</gene>
<feature type="chain" id="PRO_0000214461" description="Cell division protein FtsB">
    <location>
        <begin position="1"/>
        <end position="121"/>
    </location>
</feature>
<feature type="topological domain" description="Cytoplasmic" evidence="1">
    <location>
        <begin position="1"/>
        <end position="6"/>
    </location>
</feature>
<feature type="transmembrane region" description="Helical" evidence="1">
    <location>
        <begin position="7"/>
        <end position="24"/>
    </location>
</feature>
<feature type="topological domain" description="Periplasmic" evidence="1">
    <location>
        <begin position="25"/>
        <end position="121"/>
    </location>
</feature>
<feature type="region of interest" description="Disordered" evidence="2">
    <location>
        <begin position="98"/>
        <end position="121"/>
    </location>
</feature>
<feature type="coiled-coil region" evidence="1">
    <location>
        <begin position="31"/>
        <end position="66"/>
    </location>
</feature>
<feature type="compositionally biased region" description="Low complexity" evidence="2">
    <location>
        <begin position="99"/>
        <end position="113"/>
    </location>
</feature>
<protein>
    <recommendedName>
        <fullName evidence="1">Cell division protein FtsB</fullName>
    </recommendedName>
</protein>
<comment type="function">
    <text evidence="1">Essential cell division protein. May link together the upstream cell division proteins, which are predominantly cytoplasmic, with the downstream cell division proteins, which are predominantly periplasmic.</text>
</comment>
<comment type="subunit">
    <text evidence="1">Part of a complex composed of FtsB, FtsL and FtsQ.</text>
</comment>
<comment type="subcellular location">
    <subcellularLocation>
        <location evidence="1">Cell inner membrane</location>
        <topology evidence="1">Single-pass type II membrane protein</topology>
    </subcellularLocation>
    <text evidence="1">Localizes to the division septum.</text>
</comment>
<comment type="similarity">
    <text evidence="1">Belongs to the FtsB family.</text>
</comment>